<name>MIDNB_XENLA</name>
<proteinExistence type="evidence at transcript level"/>
<evidence type="ECO:0000250" key="1">
    <source>
        <dbReference type="UniProtKB" id="D4AE48"/>
    </source>
</evidence>
<evidence type="ECO:0000250" key="2">
    <source>
        <dbReference type="UniProtKB" id="Q3TPJ7"/>
    </source>
</evidence>
<evidence type="ECO:0000255" key="3">
    <source>
        <dbReference type="PROSITE-ProRule" id="PRU00214"/>
    </source>
</evidence>
<evidence type="ECO:0000256" key="4">
    <source>
        <dbReference type="SAM" id="MobiDB-lite"/>
    </source>
</evidence>
<evidence type="ECO:0000303" key="5">
    <source ref="1"/>
</evidence>
<keyword id="KW-0025">Alternative splicing</keyword>
<keyword id="KW-0963">Cytoplasm</keyword>
<keyword id="KW-0539">Nucleus</keyword>
<keyword id="KW-1185">Reference proteome</keyword>
<sequence>MEQQPSVPRSCTNVARETPMNLNIQSTTGTRYELSVPLNETVDGLKRRISQRLKVPKERLTLLHRETRLSSGKLQDLGISDGSRLTLLPSVEAGLMSQMSRPEQSVMQALESLTETQVNDFLSGRSPLTLALRVGDHMMFVQLQLAAQQSGGSHLQHRHVITRGADAGAPPQYRTLHTSTSALSHLASCTPGSTPPTTLSPTSSTHCDAPHSSPLTTSVFRSHGEGVSPCAEQVPCSTRGTEGTSSSPSSRSRKPGAIIESFVNHAPGVFSGTFSGTLHPHCQDGAGRPRRDIGTILQILNDLLSATRHYQGMPPSLTTLRCHTQCASQARNAKATSPQSTGPQQTTHPVGHCQAQTRTCKPSGDRLRQTENRATRCKVERLQLLMHQKRLRRKARRDSRAPYHWMPTRKSSRTSSNSSTSSGEGSLEIDFEDSLWKPDVKAELNSEFVVA</sequence>
<protein>
    <recommendedName>
        <fullName>Midnolin-B</fullName>
    </recommendedName>
    <alternativeName>
        <fullName>Midbrain nucleolar protein B</fullName>
    </alternativeName>
</protein>
<organism>
    <name type="scientific">Xenopus laevis</name>
    <name type="common">African clawed frog</name>
    <dbReference type="NCBI Taxonomy" id="8355"/>
    <lineage>
        <taxon>Eukaryota</taxon>
        <taxon>Metazoa</taxon>
        <taxon>Chordata</taxon>
        <taxon>Craniata</taxon>
        <taxon>Vertebrata</taxon>
        <taxon>Euteleostomi</taxon>
        <taxon>Amphibia</taxon>
        <taxon>Batrachia</taxon>
        <taxon>Anura</taxon>
        <taxon>Pipoidea</taxon>
        <taxon>Pipidae</taxon>
        <taxon>Xenopodinae</taxon>
        <taxon>Xenopus</taxon>
        <taxon>Xenopus</taxon>
    </lineage>
</organism>
<reference key="1">
    <citation type="submission" date="2003-02" db="EMBL/GenBank/DDBJ databases">
        <authorList>
            <consortium name="NIH - Xenopus Gene Collection (XGC) project"/>
        </authorList>
    </citation>
    <scope>NUCLEOTIDE SEQUENCE [LARGE SCALE MRNA] (ISOFORMS 1 AND 2)</scope>
    <source>
        <tissue>Embryo</tissue>
        <tissue>Oocyte</tissue>
    </source>
</reference>
<comment type="function">
    <text evidence="1 2">Facilitates ubiquitin-independent proteasomal degradation of polycomb protein CBX4. Plays a role in inhibiting the activity of glucokinase GCK and both glucose-induced and basal insulin secretion.</text>
</comment>
<comment type="subcellular location">
    <subcellularLocation>
        <location evidence="2">Nucleus</location>
    </subcellularLocation>
    <subcellularLocation>
        <location evidence="2">Cytoplasm</location>
        <location evidence="2">Cytosol</location>
    </subcellularLocation>
    <subcellularLocation>
        <location evidence="2">Nucleus</location>
        <location evidence="2">Nucleolus</location>
    </subcellularLocation>
    <text evidence="2">Detected in the nucleus and nucleolus with no expression in the cytoplasm. However, a later study finds expression in the nucleus and cytoplasm with no expression in the nucleolus.</text>
</comment>
<comment type="alternative products">
    <event type="alternative splicing"/>
    <isoform>
        <id>Q7ZWX9-1</id>
        <name>1</name>
        <sequence type="displayed"/>
    </isoform>
    <isoform>
        <id>Q7ZWX9-2</id>
        <name>2</name>
        <sequence type="described" ref="VSP_025554"/>
    </isoform>
</comment>
<accession>Q7ZWX9</accession>
<accession>Q3KPP8</accession>
<feature type="chain" id="PRO_0000287540" description="Midnolin-B">
    <location>
        <begin position="1"/>
        <end position="451"/>
    </location>
</feature>
<feature type="domain" description="Ubiquitin-like" evidence="3">
    <location>
        <begin position="20"/>
        <end position="94"/>
    </location>
</feature>
<feature type="region of interest" description="Disordered" evidence="4">
    <location>
        <begin position="187"/>
        <end position="254"/>
    </location>
</feature>
<feature type="region of interest" description="Disordered" evidence="4">
    <location>
        <begin position="331"/>
        <end position="372"/>
    </location>
</feature>
<feature type="region of interest" description="Disordered" evidence="4">
    <location>
        <begin position="388"/>
        <end position="427"/>
    </location>
</feature>
<feature type="compositionally biased region" description="Low complexity" evidence="4">
    <location>
        <begin position="190"/>
        <end position="205"/>
    </location>
</feature>
<feature type="compositionally biased region" description="Low complexity" evidence="4">
    <location>
        <begin position="237"/>
        <end position="250"/>
    </location>
</feature>
<feature type="compositionally biased region" description="Low complexity" evidence="4">
    <location>
        <begin position="336"/>
        <end position="347"/>
    </location>
</feature>
<feature type="compositionally biased region" description="Basic and acidic residues" evidence="4">
    <location>
        <begin position="363"/>
        <end position="372"/>
    </location>
</feature>
<feature type="compositionally biased region" description="Basic residues" evidence="4">
    <location>
        <begin position="388"/>
        <end position="397"/>
    </location>
</feature>
<feature type="compositionally biased region" description="Low complexity" evidence="4">
    <location>
        <begin position="413"/>
        <end position="426"/>
    </location>
</feature>
<feature type="splice variant" id="VSP_025554" description="In isoform 2." evidence="5">
    <location>
        <position position="233"/>
    </location>
</feature>
<dbReference type="EMBL" id="BC046658">
    <property type="protein sequence ID" value="AAH46658.1"/>
    <property type="molecule type" value="mRNA"/>
</dbReference>
<dbReference type="EMBL" id="BC106621">
    <property type="protein sequence ID" value="AAI06622.1"/>
    <property type="molecule type" value="mRNA"/>
</dbReference>
<dbReference type="RefSeq" id="NP_001079641.1">
    <molecule id="Q7ZWX9-1"/>
    <property type="nucleotide sequence ID" value="NM_001086172.1"/>
</dbReference>
<dbReference type="SMR" id="Q7ZWX9"/>
<dbReference type="DNASU" id="379328"/>
<dbReference type="GeneID" id="379328"/>
<dbReference type="KEGG" id="xla:379328"/>
<dbReference type="AGR" id="Xenbase:XB-GENE-6256089"/>
<dbReference type="CTD" id="379328"/>
<dbReference type="Xenbase" id="XB-GENE-6256089">
    <property type="gene designation" value="midn.S"/>
</dbReference>
<dbReference type="OMA" id="PSHDIGQ"/>
<dbReference type="OrthoDB" id="1916003at2759"/>
<dbReference type="Proteomes" id="UP000186698">
    <property type="component" value="Chromosome 1S"/>
</dbReference>
<dbReference type="Bgee" id="379328">
    <property type="expression patterns" value="Expressed in gastrula and 19 other cell types or tissues"/>
</dbReference>
<dbReference type="GO" id="GO:0005829">
    <property type="term" value="C:cytosol"/>
    <property type="evidence" value="ECO:0007669"/>
    <property type="project" value="UniProtKB-SubCell"/>
</dbReference>
<dbReference type="GO" id="GO:0005730">
    <property type="term" value="C:nucleolus"/>
    <property type="evidence" value="ECO:0007669"/>
    <property type="project" value="UniProtKB-SubCell"/>
</dbReference>
<dbReference type="GO" id="GO:0005634">
    <property type="term" value="C:nucleus"/>
    <property type="evidence" value="ECO:0000318"/>
    <property type="project" value="GO_Central"/>
</dbReference>
<dbReference type="CDD" id="cd01804">
    <property type="entry name" value="Ubl_midnolin"/>
    <property type="match status" value="1"/>
</dbReference>
<dbReference type="FunFam" id="3.10.20.90:FF:000180">
    <property type="entry name" value="midnolin isoform X1"/>
    <property type="match status" value="1"/>
</dbReference>
<dbReference type="Gene3D" id="3.10.20.90">
    <property type="entry name" value="Phosphatidylinositol 3-kinase Catalytic Subunit, Chain A, domain 1"/>
    <property type="match status" value="1"/>
</dbReference>
<dbReference type="InterPro" id="IPR039336">
    <property type="entry name" value="Midnolin"/>
</dbReference>
<dbReference type="InterPro" id="IPR000626">
    <property type="entry name" value="Ubiquitin-like_dom"/>
</dbReference>
<dbReference type="InterPro" id="IPR029071">
    <property type="entry name" value="Ubiquitin-like_domsf"/>
</dbReference>
<dbReference type="PANTHER" id="PTHR23010">
    <property type="entry name" value="MIDNOLIN"/>
    <property type="match status" value="1"/>
</dbReference>
<dbReference type="PANTHER" id="PTHR23010:SF1">
    <property type="entry name" value="MIDNOLIN"/>
    <property type="match status" value="1"/>
</dbReference>
<dbReference type="Pfam" id="PF00240">
    <property type="entry name" value="ubiquitin"/>
    <property type="match status" value="1"/>
</dbReference>
<dbReference type="SMART" id="SM00213">
    <property type="entry name" value="UBQ"/>
    <property type="match status" value="1"/>
</dbReference>
<dbReference type="SUPFAM" id="SSF54236">
    <property type="entry name" value="Ubiquitin-like"/>
    <property type="match status" value="1"/>
</dbReference>
<dbReference type="PROSITE" id="PS50053">
    <property type="entry name" value="UBIQUITIN_2"/>
    <property type="match status" value="1"/>
</dbReference>
<gene>
    <name type="primary">midn-b</name>
</gene>